<gene>
    <name type="primary">ssb</name>
    <name type="ordered locus">BP3662</name>
</gene>
<keyword id="KW-0227">DNA damage</keyword>
<keyword id="KW-0233">DNA recombination</keyword>
<keyword id="KW-0234">DNA repair</keyword>
<keyword id="KW-0235">DNA replication</keyword>
<keyword id="KW-0238">DNA-binding</keyword>
<keyword id="KW-1185">Reference proteome</keyword>
<organism>
    <name type="scientific">Bordetella pertussis (strain Tohama I / ATCC BAA-589 / NCTC 13251)</name>
    <dbReference type="NCBI Taxonomy" id="257313"/>
    <lineage>
        <taxon>Bacteria</taxon>
        <taxon>Pseudomonadati</taxon>
        <taxon>Pseudomonadota</taxon>
        <taxon>Betaproteobacteria</taxon>
        <taxon>Burkholderiales</taxon>
        <taxon>Alcaligenaceae</taxon>
        <taxon>Bordetella</taxon>
    </lineage>
</organism>
<feature type="chain" id="PRO_0000096010" description="Single-stranded DNA-binding protein">
    <location>
        <begin position="1"/>
        <end position="166"/>
    </location>
</feature>
<feature type="domain" description="SSB" evidence="1">
    <location>
        <begin position="4"/>
        <end position="110"/>
    </location>
</feature>
<feature type="region of interest" description="Disordered" evidence="2">
    <location>
        <begin position="108"/>
        <end position="166"/>
    </location>
</feature>
<feature type="short sequence motif" description="Important for interaction with partner proteins" evidence="1">
    <location>
        <begin position="161"/>
        <end position="166"/>
    </location>
</feature>
<feature type="compositionally biased region" description="Gly residues" evidence="2">
    <location>
        <begin position="112"/>
        <end position="126"/>
    </location>
</feature>
<feature type="compositionally biased region" description="Low complexity" evidence="2">
    <location>
        <begin position="132"/>
        <end position="155"/>
    </location>
</feature>
<sequence length="166" mass="18100">MASVNKVILVGNLGRDPEVRYSPDGAAICNVSIATTSQWKDKASGERREETEWHRVVMYNRLAEIAGEYLKKGRSVYIEGRLKTRKWQDKDTGADRYSTEIVADQMQMLGGRDSGGDSGGGYGGGYDDAPRQQRAPAQRPAAAPQRPAPQAAPAANLADMDDDIPF</sequence>
<evidence type="ECO:0000255" key="1">
    <source>
        <dbReference type="HAMAP-Rule" id="MF_00984"/>
    </source>
</evidence>
<evidence type="ECO:0000256" key="2">
    <source>
        <dbReference type="SAM" id="MobiDB-lite"/>
    </source>
</evidence>
<comment type="function">
    <text evidence="1">Plays an important role in DNA replication, recombination and repair. Binds to ssDNA and to an array of partner proteins to recruit them to their sites of action during DNA metabolism.</text>
</comment>
<comment type="subunit">
    <text evidence="1">Homotetramer.</text>
</comment>
<proteinExistence type="inferred from homology"/>
<name>SSB_BORPE</name>
<protein>
    <recommendedName>
        <fullName evidence="1">Single-stranded DNA-binding protein</fullName>
        <shortName evidence="1">SSB</shortName>
    </recommendedName>
</protein>
<dbReference type="EMBL" id="BX640422">
    <property type="protein sequence ID" value="CAE43919.1"/>
    <property type="molecule type" value="Genomic_DNA"/>
</dbReference>
<dbReference type="RefSeq" id="NP_882170.1">
    <property type="nucleotide sequence ID" value="NC_002929.2"/>
</dbReference>
<dbReference type="RefSeq" id="WP_003806953.1">
    <property type="nucleotide sequence ID" value="NZ_CP039022.1"/>
</dbReference>
<dbReference type="SMR" id="P66846"/>
<dbReference type="STRING" id="257313.BP3662"/>
<dbReference type="PaxDb" id="257313-BP3662"/>
<dbReference type="GeneID" id="69600110"/>
<dbReference type="KEGG" id="bpe:BP3662"/>
<dbReference type="PATRIC" id="fig|257313.5.peg.3960"/>
<dbReference type="eggNOG" id="COG0629">
    <property type="taxonomic scope" value="Bacteria"/>
</dbReference>
<dbReference type="HOGENOM" id="CLU_078758_0_1_4"/>
<dbReference type="Proteomes" id="UP000002676">
    <property type="component" value="Chromosome"/>
</dbReference>
<dbReference type="GO" id="GO:0009295">
    <property type="term" value="C:nucleoid"/>
    <property type="evidence" value="ECO:0007669"/>
    <property type="project" value="TreeGrafter"/>
</dbReference>
<dbReference type="GO" id="GO:0003697">
    <property type="term" value="F:single-stranded DNA binding"/>
    <property type="evidence" value="ECO:0007669"/>
    <property type="project" value="UniProtKB-UniRule"/>
</dbReference>
<dbReference type="GO" id="GO:0006310">
    <property type="term" value="P:DNA recombination"/>
    <property type="evidence" value="ECO:0007669"/>
    <property type="project" value="UniProtKB-UniRule"/>
</dbReference>
<dbReference type="GO" id="GO:0006281">
    <property type="term" value="P:DNA repair"/>
    <property type="evidence" value="ECO:0007669"/>
    <property type="project" value="UniProtKB-UniRule"/>
</dbReference>
<dbReference type="GO" id="GO:0006260">
    <property type="term" value="P:DNA replication"/>
    <property type="evidence" value="ECO:0007669"/>
    <property type="project" value="UniProtKB-UniRule"/>
</dbReference>
<dbReference type="CDD" id="cd04496">
    <property type="entry name" value="SSB_OBF"/>
    <property type="match status" value="1"/>
</dbReference>
<dbReference type="Gene3D" id="2.40.50.140">
    <property type="entry name" value="Nucleic acid-binding proteins"/>
    <property type="match status" value="1"/>
</dbReference>
<dbReference type="HAMAP" id="MF_00984">
    <property type="entry name" value="SSB"/>
    <property type="match status" value="1"/>
</dbReference>
<dbReference type="InterPro" id="IPR012340">
    <property type="entry name" value="NA-bd_OB-fold"/>
</dbReference>
<dbReference type="InterPro" id="IPR000424">
    <property type="entry name" value="Primosome_PriB/ssb"/>
</dbReference>
<dbReference type="InterPro" id="IPR011344">
    <property type="entry name" value="ssDNA-bd"/>
</dbReference>
<dbReference type="NCBIfam" id="TIGR00621">
    <property type="entry name" value="ssb"/>
    <property type="match status" value="1"/>
</dbReference>
<dbReference type="PANTHER" id="PTHR10302">
    <property type="entry name" value="SINGLE-STRANDED DNA-BINDING PROTEIN"/>
    <property type="match status" value="1"/>
</dbReference>
<dbReference type="PANTHER" id="PTHR10302:SF27">
    <property type="entry name" value="SINGLE-STRANDED DNA-BINDING PROTEIN"/>
    <property type="match status" value="1"/>
</dbReference>
<dbReference type="Pfam" id="PF00436">
    <property type="entry name" value="SSB"/>
    <property type="match status" value="1"/>
</dbReference>
<dbReference type="SUPFAM" id="SSF50249">
    <property type="entry name" value="Nucleic acid-binding proteins"/>
    <property type="match status" value="1"/>
</dbReference>
<dbReference type="PROSITE" id="PS50935">
    <property type="entry name" value="SSB"/>
    <property type="match status" value="1"/>
</dbReference>
<accession>P66846</accession>
<accession>P59929</accession>
<accession>Q7VT88</accession>
<accession>Q7WR79</accession>
<reference key="1">
    <citation type="journal article" date="2003" name="Nat. Genet.">
        <title>Comparative analysis of the genome sequences of Bordetella pertussis, Bordetella parapertussis and Bordetella bronchiseptica.</title>
        <authorList>
            <person name="Parkhill J."/>
            <person name="Sebaihia M."/>
            <person name="Preston A."/>
            <person name="Murphy L.D."/>
            <person name="Thomson N.R."/>
            <person name="Harris D.E."/>
            <person name="Holden M.T.G."/>
            <person name="Churcher C.M."/>
            <person name="Bentley S.D."/>
            <person name="Mungall K.L."/>
            <person name="Cerdeno-Tarraga A.-M."/>
            <person name="Temple L."/>
            <person name="James K.D."/>
            <person name="Harris B."/>
            <person name="Quail M.A."/>
            <person name="Achtman M."/>
            <person name="Atkin R."/>
            <person name="Baker S."/>
            <person name="Basham D."/>
            <person name="Bason N."/>
            <person name="Cherevach I."/>
            <person name="Chillingworth T."/>
            <person name="Collins M."/>
            <person name="Cronin A."/>
            <person name="Davis P."/>
            <person name="Doggett J."/>
            <person name="Feltwell T."/>
            <person name="Goble A."/>
            <person name="Hamlin N."/>
            <person name="Hauser H."/>
            <person name="Holroyd S."/>
            <person name="Jagels K."/>
            <person name="Leather S."/>
            <person name="Moule S."/>
            <person name="Norberczak H."/>
            <person name="O'Neil S."/>
            <person name="Ormond D."/>
            <person name="Price C."/>
            <person name="Rabbinowitsch E."/>
            <person name="Rutter S."/>
            <person name="Sanders M."/>
            <person name="Saunders D."/>
            <person name="Seeger K."/>
            <person name="Sharp S."/>
            <person name="Simmonds M."/>
            <person name="Skelton J."/>
            <person name="Squares R."/>
            <person name="Squares S."/>
            <person name="Stevens K."/>
            <person name="Unwin L."/>
            <person name="Whitehead S."/>
            <person name="Barrell B.G."/>
            <person name="Maskell D.J."/>
        </authorList>
    </citation>
    <scope>NUCLEOTIDE SEQUENCE [LARGE SCALE GENOMIC DNA]</scope>
    <source>
        <strain>Tohama I / ATCC BAA-589 / NCTC 13251</strain>
    </source>
</reference>